<evidence type="ECO:0000255" key="1">
    <source>
        <dbReference type="HAMAP-Rule" id="MF_01719"/>
    </source>
</evidence>
<accession>Q99WE1</accession>
<dbReference type="EC" id="7.4.2.11" evidence="1"/>
<dbReference type="EMBL" id="BA000017">
    <property type="protein sequence ID" value="BAB56624.1"/>
    <property type="molecule type" value="Genomic_DNA"/>
</dbReference>
<dbReference type="RefSeq" id="WP_000569281.1">
    <property type="nucleotide sequence ID" value="NC_002758.2"/>
</dbReference>
<dbReference type="SMR" id="Q99WE1"/>
<dbReference type="KEGG" id="sav:SAV0462"/>
<dbReference type="HOGENOM" id="CLU_000604_1_3_9"/>
<dbReference type="PhylomeDB" id="Q99WE1"/>
<dbReference type="Proteomes" id="UP000002481">
    <property type="component" value="Chromosome"/>
</dbReference>
<dbReference type="GO" id="GO:0005886">
    <property type="term" value="C:plasma membrane"/>
    <property type="evidence" value="ECO:0007669"/>
    <property type="project" value="UniProtKB-SubCell"/>
</dbReference>
<dbReference type="GO" id="GO:0033232">
    <property type="term" value="F:ABC-type D-methionine transporter activity"/>
    <property type="evidence" value="ECO:0007669"/>
    <property type="project" value="UniProtKB-EC"/>
</dbReference>
<dbReference type="GO" id="GO:0005524">
    <property type="term" value="F:ATP binding"/>
    <property type="evidence" value="ECO:0007669"/>
    <property type="project" value="UniProtKB-KW"/>
</dbReference>
<dbReference type="GO" id="GO:0016887">
    <property type="term" value="F:ATP hydrolysis activity"/>
    <property type="evidence" value="ECO:0007669"/>
    <property type="project" value="InterPro"/>
</dbReference>
<dbReference type="CDD" id="cd03258">
    <property type="entry name" value="ABC_MetN_methionine_transporter"/>
    <property type="match status" value="1"/>
</dbReference>
<dbReference type="FunFam" id="3.40.50.300:FF:000056">
    <property type="entry name" value="Cell division ATP-binding protein FtsE"/>
    <property type="match status" value="1"/>
</dbReference>
<dbReference type="Gene3D" id="3.30.70.260">
    <property type="match status" value="1"/>
</dbReference>
<dbReference type="Gene3D" id="3.40.50.300">
    <property type="entry name" value="P-loop containing nucleotide triphosphate hydrolases"/>
    <property type="match status" value="1"/>
</dbReference>
<dbReference type="InterPro" id="IPR003593">
    <property type="entry name" value="AAA+_ATPase"/>
</dbReference>
<dbReference type="InterPro" id="IPR003439">
    <property type="entry name" value="ABC_transporter-like_ATP-bd"/>
</dbReference>
<dbReference type="InterPro" id="IPR017871">
    <property type="entry name" value="ABC_transporter-like_CS"/>
</dbReference>
<dbReference type="InterPro" id="IPR045865">
    <property type="entry name" value="ACT-like_dom_sf"/>
</dbReference>
<dbReference type="InterPro" id="IPR041701">
    <property type="entry name" value="MetN_ABC"/>
</dbReference>
<dbReference type="InterPro" id="IPR050086">
    <property type="entry name" value="MetN_ABC_transporter-like"/>
</dbReference>
<dbReference type="InterPro" id="IPR018449">
    <property type="entry name" value="NIL_domain"/>
</dbReference>
<dbReference type="InterPro" id="IPR027417">
    <property type="entry name" value="P-loop_NTPase"/>
</dbReference>
<dbReference type="PANTHER" id="PTHR43166">
    <property type="entry name" value="AMINO ACID IMPORT ATP-BINDING PROTEIN"/>
    <property type="match status" value="1"/>
</dbReference>
<dbReference type="PANTHER" id="PTHR43166:SF30">
    <property type="entry name" value="METHIONINE IMPORT ATP-BINDING PROTEIN METN"/>
    <property type="match status" value="1"/>
</dbReference>
<dbReference type="Pfam" id="PF00005">
    <property type="entry name" value="ABC_tran"/>
    <property type="match status" value="1"/>
</dbReference>
<dbReference type="Pfam" id="PF09383">
    <property type="entry name" value="NIL"/>
    <property type="match status" value="1"/>
</dbReference>
<dbReference type="SMART" id="SM00382">
    <property type="entry name" value="AAA"/>
    <property type="match status" value="1"/>
</dbReference>
<dbReference type="SMART" id="SM00930">
    <property type="entry name" value="NIL"/>
    <property type="match status" value="1"/>
</dbReference>
<dbReference type="SUPFAM" id="SSF55021">
    <property type="entry name" value="ACT-like"/>
    <property type="match status" value="1"/>
</dbReference>
<dbReference type="SUPFAM" id="SSF52540">
    <property type="entry name" value="P-loop containing nucleoside triphosphate hydrolases"/>
    <property type="match status" value="1"/>
</dbReference>
<dbReference type="PROSITE" id="PS00211">
    <property type="entry name" value="ABC_TRANSPORTER_1"/>
    <property type="match status" value="1"/>
</dbReference>
<dbReference type="PROSITE" id="PS50893">
    <property type="entry name" value="ABC_TRANSPORTER_2"/>
    <property type="match status" value="1"/>
</dbReference>
<dbReference type="PROSITE" id="PS51264">
    <property type="entry name" value="METN"/>
    <property type="match status" value="1"/>
</dbReference>
<proteinExistence type="inferred from homology"/>
<organism>
    <name type="scientific">Staphylococcus aureus (strain Mu50 / ATCC 700699)</name>
    <dbReference type="NCBI Taxonomy" id="158878"/>
    <lineage>
        <taxon>Bacteria</taxon>
        <taxon>Bacillati</taxon>
        <taxon>Bacillota</taxon>
        <taxon>Bacilli</taxon>
        <taxon>Bacillales</taxon>
        <taxon>Staphylococcaceae</taxon>
        <taxon>Staphylococcus</taxon>
    </lineage>
</organism>
<gene>
    <name evidence="1" type="primary">metN1</name>
    <name type="ordered locus">SAV0462</name>
</gene>
<feature type="chain" id="PRO_0000270395" description="Methionine import ATP-binding protein MetN 1">
    <location>
        <begin position="1"/>
        <end position="341"/>
    </location>
</feature>
<feature type="domain" description="ABC transporter" evidence="1">
    <location>
        <begin position="2"/>
        <end position="241"/>
    </location>
</feature>
<feature type="binding site" evidence="1">
    <location>
        <begin position="38"/>
        <end position="45"/>
    </location>
    <ligand>
        <name>ATP</name>
        <dbReference type="ChEBI" id="CHEBI:30616"/>
    </ligand>
</feature>
<sequence>MIEFRQVSKSFHKKKQTIDALKDVSFTVNRNDIFGVIGYSGAGKSTLVRLVNHLEAASNGQVIVDGHDITNYSEKGMREIKKDIGMIFQHFNLLNSATVFKNVAMPLILSKKSKTEIKQRVTEMLEFVGLSDKKDQFPDELSGGQKQRVAIARALVTNPKILLCDEATSALDPATTASILTLLKNVNQTFGITIMMITHEMRVIKDICNRVAVMEKGQVVETGTVKEVFSHPKTTIAQNFVSTVIQTEPSTSLIRRLNDEQVGGFKDYKIFVEETQVTQPIINDLIQICGREVKILFSSMSEIQGNTVCYMWLRFNIDQQFDDTAINQYFKEKNIQFEEVH</sequence>
<protein>
    <recommendedName>
        <fullName evidence="1">Methionine import ATP-binding protein MetN 1</fullName>
        <ecNumber evidence="1">7.4.2.11</ecNumber>
    </recommendedName>
</protein>
<comment type="function">
    <text evidence="1">Part of the ABC transporter complex MetNIQ involved in methionine import. Responsible for energy coupling to the transport system.</text>
</comment>
<comment type="catalytic activity">
    <reaction evidence="1">
        <text>L-methionine(out) + ATP + H2O = L-methionine(in) + ADP + phosphate + H(+)</text>
        <dbReference type="Rhea" id="RHEA:29779"/>
        <dbReference type="ChEBI" id="CHEBI:15377"/>
        <dbReference type="ChEBI" id="CHEBI:15378"/>
        <dbReference type="ChEBI" id="CHEBI:30616"/>
        <dbReference type="ChEBI" id="CHEBI:43474"/>
        <dbReference type="ChEBI" id="CHEBI:57844"/>
        <dbReference type="ChEBI" id="CHEBI:456216"/>
        <dbReference type="EC" id="7.4.2.11"/>
    </reaction>
</comment>
<comment type="catalytic activity">
    <reaction evidence="1">
        <text>D-methionine(out) + ATP + H2O = D-methionine(in) + ADP + phosphate + H(+)</text>
        <dbReference type="Rhea" id="RHEA:29767"/>
        <dbReference type="ChEBI" id="CHEBI:15377"/>
        <dbReference type="ChEBI" id="CHEBI:15378"/>
        <dbReference type="ChEBI" id="CHEBI:30616"/>
        <dbReference type="ChEBI" id="CHEBI:43474"/>
        <dbReference type="ChEBI" id="CHEBI:57932"/>
        <dbReference type="ChEBI" id="CHEBI:456216"/>
        <dbReference type="EC" id="7.4.2.11"/>
    </reaction>
</comment>
<comment type="subunit">
    <text evidence="1">The complex is composed of two ATP-binding proteins (MetN), two transmembrane proteins (MetI) and a solute-binding protein (MetQ).</text>
</comment>
<comment type="subcellular location">
    <subcellularLocation>
        <location evidence="1">Cell membrane</location>
        <topology evidence="1">Peripheral membrane protein</topology>
    </subcellularLocation>
</comment>
<comment type="similarity">
    <text evidence="1">Belongs to the ABC transporter superfamily. Methionine importer (TC 3.A.1.24) family.</text>
</comment>
<name>METN1_STAAM</name>
<reference key="1">
    <citation type="journal article" date="2001" name="Lancet">
        <title>Whole genome sequencing of meticillin-resistant Staphylococcus aureus.</title>
        <authorList>
            <person name="Kuroda M."/>
            <person name="Ohta T."/>
            <person name="Uchiyama I."/>
            <person name="Baba T."/>
            <person name="Yuzawa H."/>
            <person name="Kobayashi I."/>
            <person name="Cui L."/>
            <person name="Oguchi A."/>
            <person name="Aoki K."/>
            <person name="Nagai Y."/>
            <person name="Lian J.-Q."/>
            <person name="Ito T."/>
            <person name="Kanamori M."/>
            <person name="Matsumaru H."/>
            <person name="Maruyama A."/>
            <person name="Murakami H."/>
            <person name="Hosoyama A."/>
            <person name="Mizutani-Ui Y."/>
            <person name="Takahashi N.K."/>
            <person name="Sawano T."/>
            <person name="Inoue R."/>
            <person name="Kaito C."/>
            <person name="Sekimizu K."/>
            <person name="Hirakawa H."/>
            <person name="Kuhara S."/>
            <person name="Goto S."/>
            <person name="Yabuzaki J."/>
            <person name="Kanehisa M."/>
            <person name="Yamashita A."/>
            <person name="Oshima K."/>
            <person name="Furuya K."/>
            <person name="Yoshino C."/>
            <person name="Shiba T."/>
            <person name="Hattori M."/>
            <person name="Ogasawara N."/>
            <person name="Hayashi H."/>
            <person name="Hiramatsu K."/>
        </authorList>
    </citation>
    <scope>NUCLEOTIDE SEQUENCE [LARGE SCALE GENOMIC DNA]</scope>
    <source>
        <strain>Mu50 / ATCC 700699</strain>
    </source>
</reference>
<keyword id="KW-0029">Amino-acid transport</keyword>
<keyword id="KW-0067">ATP-binding</keyword>
<keyword id="KW-1003">Cell membrane</keyword>
<keyword id="KW-0472">Membrane</keyword>
<keyword id="KW-0547">Nucleotide-binding</keyword>
<keyword id="KW-1278">Translocase</keyword>
<keyword id="KW-0813">Transport</keyword>